<protein>
    <recommendedName>
        <fullName evidence="1">Glycerol-3-phosphate dehydrogenase [NAD(P)+]</fullName>
        <ecNumber evidence="1">1.1.1.94</ecNumber>
    </recommendedName>
    <alternativeName>
        <fullName evidence="1">NAD(P)(+)-dependent glycerol-3-phosphate dehydrogenase</fullName>
    </alternativeName>
    <alternativeName>
        <fullName evidence="1">NAD(P)H-dependent dihydroxyacetone-phosphate reductase</fullName>
    </alternativeName>
</protein>
<sequence>MTKQKIAVLGPGSWGTALAQVLNDNGHEVRLWGNVVEQIEEINTNHTNQRYFKDITLDSKIKAYTNLEEAINNVDSILFVVPTKVTRLVAKQVANLLKHKVVLMHASKGLEPGTHERLSTILEEEISEQYRSDIVVVSGPSHAEEAIVRDITLITAASKDIEAAKYVQKLFSNHYFRLYTNTDVVGVETAGALKNIIAVGAGALHGLGYGDNAKAAIITRGLAEITRLGVQLGADPLTFSGLSGVGDLIVTGTSVHSRNWRAGDALGRGEKLEDIEKNMGMVIEGISTTKVAYEIAQNLNVYMPITEAIYKSIYEGANIKDSILDMMSNEFRSENEWH</sequence>
<reference key="1">
    <citation type="journal article" date="2002" name="Proc. Natl. Acad. Sci. U.S.A.">
        <title>Complete genome sequence and comparative genomic analysis of an emerging human pathogen, serotype V Streptococcus agalactiae.</title>
        <authorList>
            <person name="Tettelin H."/>
            <person name="Masignani V."/>
            <person name="Cieslewicz M.J."/>
            <person name="Eisen J.A."/>
            <person name="Peterson S.N."/>
            <person name="Wessels M.R."/>
            <person name="Paulsen I.T."/>
            <person name="Nelson K.E."/>
            <person name="Margarit I."/>
            <person name="Read T.D."/>
            <person name="Madoff L.C."/>
            <person name="Wolf A.M."/>
            <person name="Beanan M.J."/>
            <person name="Brinkac L.M."/>
            <person name="Daugherty S.C."/>
            <person name="DeBoy R.T."/>
            <person name="Durkin A.S."/>
            <person name="Kolonay J.F."/>
            <person name="Madupu R."/>
            <person name="Lewis M.R."/>
            <person name="Radune D."/>
            <person name="Fedorova N.B."/>
            <person name="Scanlan D."/>
            <person name="Khouri H.M."/>
            <person name="Mulligan S."/>
            <person name="Carty H.A."/>
            <person name="Cline R.T."/>
            <person name="Van Aken S.E."/>
            <person name="Gill J."/>
            <person name="Scarselli M."/>
            <person name="Mora M."/>
            <person name="Iacobini E.T."/>
            <person name="Brettoni C."/>
            <person name="Galli G."/>
            <person name="Mariani M."/>
            <person name="Vegni F."/>
            <person name="Maione D."/>
            <person name="Rinaudo D."/>
            <person name="Rappuoli R."/>
            <person name="Telford J.L."/>
            <person name="Kasper D.L."/>
            <person name="Grandi G."/>
            <person name="Fraser C.M."/>
        </authorList>
    </citation>
    <scope>NUCLEOTIDE SEQUENCE [LARGE SCALE GENOMIC DNA]</scope>
    <source>
        <strain>ATCC BAA-611 / 2603 V/R</strain>
    </source>
</reference>
<evidence type="ECO:0000255" key="1">
    <source>
        <dbReference type="HAMAP-Rule" id="MF_00394"/>
    </source>
</evidence>
<feature type="chain" id="PRO_0000138034" description="Glycerol-3-phosphate dehydrogenase [NAD(P)+]">
    <location>
        <begin position="1"/>
        <end position="338"/>
    </location>
</feature>
<feature type="active site" description="Proton acceptor" evidence="1">
    <location>
        <position position="194"/>
    </location>
</feature>
<feature type="binding site" evidence="1">
    <location>
        <position position="13"/>
    </location>
    <ligand>
        <name>NADPH</name>
        <dbReference type="ChEBI" id="CHEBI:57783"/>
    </ligand>
</feature>
<feature type="binding site" evidence="1">
    <location>
        <position position="14"/>
    </location>
    <ligand>
        <name>NADPH</name>
        <dbReference type="ChEBI" id="CHEBI:57783"/>
    </ligand>
</feature>
<feature type="binding site" evidence="1">
    <location>
        <position position="108"/>
    </location>
    <ligand>
        <name>NADPH</name>
        <dbReference type="ChEBI" id="CHEBI:57783"/>
    </ligand>
</feature>
<feature type="binding site" evidence="1">
    <location>
        <position position="108"/>
    </location>
    <ligand>
        <name>sn-glycerol 3-phosphate</name>
        <dbReference type="ChEBI" id="CHEBI:57597"/>
    </ligand>
</feature>
<feature type="binding site" evidence="1">
    <location>
        <position position="139"/>
    </location>
    <ligand>
        <name>sn-glycerol 3-phosphate</name>
        <dbReference type="ChEBI" id="CHEBI:57597"/>
    </ligand>
</feature>
<feature type="binding site" evidence="1">
    <location>
        <position position="141"/>
    </location>
    <ligand>
        <name>sn-glycerol 3-phosphate</name>
        <dbReference type="ChEBI" id="CHEBI:57597"/>
    </ligand>
</feature>
<feature type="binding site" evidence="1">
    <location>
        <position position="143"/>
    </location>
    <ligand>
        <name>NADPH</name>
        <dbReference type="ChEBI" id="CHEBI:57783"/>
    </ligand>
</feature>
<feature type="binding site" evidence="1">
    <location>
        <position position="194"/>
    </location>
    <ligand>
        <name>sn-glycerol 3-phosphate</name>
        <dbReference type="ChEBI" id="CHEBI:57597"/>
    </ligand>
</feature>
<feature type="binding site" evidence="1">
    <location>
        <position position="247"/>
    </location>
    <ligand>
        <name>sn-glycerol 3-phosphate</name>
        <dbReference type="ChEBI" id="CHEBI:57597"/>
    </ligand>
</feature>
<feature type="binding site" evidence="1">
    <location>
        <position position="257"/>
    </location>
    <ligand>
        <name>sn-glycerol 3-phosphate</name>
        <dbReference type="ChEBI" id="CHEBI:57597"/>
    </ligand>
</feature>
<feature type="binding site" evidence="1">
    <location>
        <position position="258"/>
    </location>
    <ligand>
        <name>NADPH</name>
        <dbReference type="ChEBI" id="CHEBI:57783"/>
    </ligand>
</feature>
<feature type="binding site" evidence="1">
    <location>
        <position position="258"/>
    </location>
    <ligand>
        <name>sn-glycerol 3-phosphate</name>
        <dbReference type="ChEBI" id="CHEBI:57597"/>
    </ligand>
</feature>
<feature type="binding site" evidence="1">
    <location>
        <position position="259"/>
    </location>
    <ligand>
        <name>sn-glycerol 3-phosphate</name>
        <dbReference type="ChEBI" id="CHEBI:57597"/>
    </ligand>
</feature>
<feature type="binding site" evidence="1">
    <location>
        <position position="282"/>
    </location>
    <ligand>
        <name>NADPH</name>
        <dbReference type="ChEBI" id="CHEBI:57783"/>
    </ligand>
</feature>
<feature type="binding site" evidence="1">
    <location>
        <position position="284"/>
    </location>
    <ligand>
        <name>NADPH</name>
        <dbReference type="ChEBI" id="CHEBI:57783"/>
    </ligand>
</feature>
<gene>
    <name evidence="1" type="primary">gpsA</name>
    <name type="ordered locus">SAG0407</name>
</gene>
<organism>
    <name type="scientific">Streptococcus agalactiae serotype V (strain ATCC BAA-611 / 2603 V/R)</name>
    <dbReference type="NCBI Taxonomy" id="208435"/>
    <lineage>
        <taxon>Bacteria</taxon>
        <taxon>Bacillati</taxon>
        <taxon>Bacillota</taxon>
        <taxon>Bacilli</taxon>
        <taxon>Lactobacillales</taxon>
        <taxon>Streptococcaceae</taxon>
        <taxon>Streptococcus</taxon>
    </lineage>
</organism>
<comment type="function">
    <text evidence="1">Catalyzes the reduction of the glycolytic intermediate dihydroxyacetone phosphate (DHAP) to sn-glycerol 3-phosphate (G3P), the key precursor for phospholipid synthesis.</text>
</comment>
<comment type="catalytic activity">
    <reaction evidence="1">
        <text>sn-glycerol 3-phosphate + NAD(+) = dihydroxyacetone phosphate + NADH + H(+)</text>
        <dbReference type="Rhea" id="RHEA:11092"/>
        <dbReference type="ChEBI" id="CHEBI:15378"/>
        <dbReference type="ChEBI" id="CHEBI:57540"/>
        <dbReference type="ChEBI" id="CHEBI:57597"/>
        <dbReference type="ChEBI" id="CHEBI:57642"/>
        <dbReference type="ChEBI" id="CHEBI:57945"/>
        <dbReference type="EC" id="1.1.1.94"/>
    </reaction>
    <physiologicalReaction direction="right-to-left" evidence="1">
        <dbReference type="Rhea" id="RHEA:11094"/>
    </physiologicalReaction>
</comment>
<comment type="catalytic activity">
    <reaction evidence="1">
        <text>sn-glycerol 3-phosphate + NADP(+) = dihydroxyacetone phosphate + NADPH + H(+)</text>
        <dbReference type="Rhea" id="RHEA:11096"/>
        <dbReference type="ChEBI" id="CHEBI:15378"/>
        <dbReference type="ChEBI" id="CHEBI:57597"/>
        <dbReference type="ChEBI" id="CHEBI:57642"/>
        <dbReference type="ChEBI" id="CHEBI:57783"/>
        <dbReference type="ChEBI" id="CHEBI:58349"/>
        <dbReference type="EC" id="1.1.1.94"/>
    </reaction>
    <physiologicalReaction direction="right-to-left" evidence="1">
        <dbReference type="Rhea" id="RHEA:11098"/>
    </physiologicalReaction>
</comment>
<comment type="pathway">
    <text evidence="1">Membrane lipid metabolism; glycerophospholipid metabolism.</text>
</comment>
<comment type="subcellular location">
    <subcellularLocation>
        <location evidence="1">Cytoplasm</location>
    </subcellularLocation>
</comment>
<comment type="similarity">
    <text evidence="1">Belongs to the NAD-dependent glycerol-3-phosphate dehydrogenase family.</text>
</comment>
<name>GPDA_STRA5</name>
<keyword id="KW-0963">Cytoplasm</keyword>
<keyword id="KW-0444">Lipid biosynthesis</keyword>
<keyword id="KW-0443">Lipid metabolism</keyword>
<keyword id="KW-0520">NAD</keyword>
<keyword id="KW-0521">NADP</keyword>
<keyword id="KW-0547">Nucleotide-binding</keyword>
<keyword id="KW-0560">Oxidoreductase</keyword>
<keyword id="KW-0594">Phospholipid biosynthesis</keyword>
<keyword id="KW-1208">Phospholipid metabolism</keyword>
<keyword id="KW-1185">Reference proteome</keyword>
<proteinExistence type="inferred from homology"/>
<accession>Q8E1E8</accession>
<dbReference type="EC" id="1.1.1.94" evidence="1"/>
<dbReference type="EMBL" id="AE009948">
    <property type="protein sequence ID" value="AAM99313.1"/>
    <property type="molecule type" value="Genomic_DNA"/>
</dbReference>
<dbReference type="RefSeq" id="NP_687441.1">
    <property type="nucleotide sequence ID" value="NC_004116.1"/>
</dbReference>
<dbReference type="RefSeq" id="WP_000166106.1">
    <property type="nucleotide sequence ID" value="NC_004116.1"/>
</dbReference>
<dbReference type="SMR" id="Q8E1E8"/>
<dbReference type="STRING" id="208435.SAG0407"/>
<dbReference type="KEGG" id="sag:SAG0407"/>
<dbReference type="PATRIC" id="fig|208435.3.peg.402"/>
<dbReference type="HOGENOM" id="CLU_033449_0_2_9"/>
<dbReference type="OrthoDB" id="9812273at2"/>
<dbReference type="UniPathway" id="UPA00940"/>
<dbReference type="Proteomes" id="UP000000821">
    <property type="component" value="Chromosome"/>
</dbReference>
<dbReference type="GO" id="GO:0005829">
    <property type="term" value="C:cytosol"/>
    <property type="evidence" value="ECO:0007669"/>
    <property type="project" value="TreeGrafter"/>
</dbReference>
<dbReference type="GO" id="GO:0047952">
    <property type="term" value="F:glycerol-3-phosphate dehydrogenase [NAD(P)+] activity"/>
    <property type="evidence" value="ECO:0007669"/>
    <property type="project" value="UniProtKB-UniRule"/>
</dbReference>
<dbReference type="GO" id="GO:0051287">
    <property type="term" value="F:NAD binding"/>
    <property type="evidence" value="ECO:0007669"/>
    <property type="project" value="InterPro"/>
</dbReference>
<dbReference type="GO" id="GO:0005975">
    <property type="term" value="P:carbohydrate metabolic process"/>
    <property type="evidence" value="ECO:0007669"/>
    <property type="project" value="InterPro"/>
</dbReference>
<dbReference type="GO" id="GO:0046167">
    <property type="term" value="P:glycerol-3-phosphate biosynthetic process"/>
    <property type="evidence" value="ECO:0007669"/>
    <property type="project" value="UniProtKB-UniRule"/>
</dbReference>
<dbReference type="GO" id="GO:0046168">
    <property type="term" value="P:glycerol-3-phosphate catabolic process"/>
    <property type="evidence" value="ECO:0007669"/>
    <property type="project" value="InterPro"/>
</dbReference>
<dbReference type="GO" id="GO:0006650">
    <property type="term" value="P:glycerophospholipid metabolic process"/>
    <property type="evidence" value="ECO:0007669"/>
    <property type="project" value="UniProtKB-UniRule"/>
</dbReference>
<dbReference type="GO" id="GO:0008654">
    <property type="term" value="P:phospholipid biosynthetic process"/>
    <property type="evidence" value="ECO:0007669"/>
    <property type="project" value="UniProtKB-KW"/>
</dbReference>
<dbReference type="GO" id="GO:0141135">
    <property type="term" value="P:symbiont-mediated suppression of host chemokine signal transduction pathway"/>
    <property type="evidence" value="ECO:0000269"/>
    <property type="project" value="SigSci"/>
</dbReference>
<dbReference type="FunFam" id="1.10.1040.10:FF:000001">
    <property type="entry name" value="Glycerol-3-phosphate dehydrogenase [NAD(P)+]"/>
    <property type="match status" value="1"/>
</dbReference>
<dbReference type="FunFam" id="3.40.50.720:FF:000019">
    <property type="entry name" value="Glycerol-3-phosphate dehydrogenase [NAD(P)+]"/>
    <property type="match status" value="1"/>
</dbReference>
<dbReference type="Gene3D" id="1.10.1040.10">
    <property type="entry name" value="N-(1-d-carboxylethyl)-l-norvaline Dehydrogenase, domain 2"/>
    <property type="match status" value="1"/>
</dbReference>
<dbReference type="Gene3D" id="3.40.50.720">
    <property type="entry name" value="NAD(P)-binding Rossmann-like Domain"/>
    <property type="match status" value="1"/>
</dbReference>
<dbReference type="HAMAP" id="MF_00394">
    <property type="entry name" value="NAD_Glyc3P_dehydrog"/>
    <property type="match status" value="1"/>
</dbReference>
<dbReference type="InterPro" id="IPR008927">
    <property type="entry name" value="6-PGluconate_DH-like_C_sf"/>
</dbReference>
<dbReference type="InterPro" id="IPR013328">
    <property type="entry name" value="6PGD_dom2"/>
</dbReference>
<dbReference type="InterPro" id="IPR006168">
    <property type="entry name" value="G3P_DH_NAD-dep"/>
</dbReference>
<dbReference type="InterPro" id="IPR006109">
    <property type="entry name" value="G3P_DH_NAD-dep_C"/>
</dbReference>
<dbReference type="InterPro" id="IPR011128">
    <property type="entry name" value="G3P_DH_NAD-dep_N"/>
</dbReference>
<dbReference type="InterPro" id="IPR036291">
    <property type="entry name" value="NAD(P)-bd_dom_sf"/>
</dbReference>
<dbReference type="NCBIfam" id="NF000940">
    <property type="entry name" value="PRK00094.1-2"/>
    <property type="match status" value="1"/>
</dbReference>
<dbReference type="NCBIfam" id="NF000941">
    <property type="entry name" value="PRK00094.1-3"/>
    <property type="match status" value="1"/>
</dbReference>
<dbReference type="NCBIfam" id="NF000942">
    <property type="entry name" value="PRK00094.1-4"/>
    <property type="match status" value="1"/>
</dbReference>
<dbReference type="PANTHER" id="PTHR11728">
    <property type="entry name" value="GLYCEROL-3-PHOSPHATE DEHYDROGENASE"/>
    <property type="match status" value="1"/>
</dbReference>
<dbReference type="PANTHER" id="PTHR11728:SF1">
    <property type="entry name" value="GLYCEROL-3-PHOSPHATE DEHYDROGENASE [NAD(+)] 2, CHLOROPLASTIC"/>
    <property type="match status" value="1"/>
</dbReference>
<dbReference type="Pfam" id="PF07479">
    <property type="entry name" value="NAD_Gly3P_dh_C"/>
    <property type="match status" value="1"/>
</dbReference>
<dbReference type="Pfam" id="PF01210">
    <property type="entry name" value="NAD_Gly3P_dh_N"/>
    <property type="match status" value="1"/>
</dbReference>
<dbReference type="PIRSF" id="PIRSF000114">
    <property type="entry name" value="Glycerol-3-P_dh"/>
    <property type="match status" value="1"/>
</dbReference>
<dbReference type="PRINTS" id="PR00077">
    <property type="entry name" value="GPDHDRGNASE"/>
</dbReference>
<dbReference type="SUPFAM" id="SSF48179">
    <property type="entry name" value="6-phosphogluconate dehydrogenase C-terminal domain-like"/>
    <property type="match status" value="1"/>
</dbReference>
<dbReference type="SUPFAM" id="SSF51735">
    <property type="entry name" value="NAD(P)-binding Rossmann-fold domains"/>
    <property type="match status" value="1"/>
</dbReference>
<dbReference type="PROSITE" id="PS00957">
    <property type="entry name" value="NAD_G3PDH"/>
    <property type="match status" value="1"/>
</dbReference>